<name>SUCC_YERPG</name>
<keyword id="KW-0067">ATP-binding</keyword>
<keyword id="KW-0436">Ligase</keyword>
<keyword id="KW-0460">Magnesium</keyword>
<keyword id="KW-0479">Metal-binding</keyword>
<keyword id="KW-0547">Nucleotide-binding</keyword>
<keyword id="KW-0816">Tricarboxylic acid cycle</keyword>
<accession>A9R2F2</accession>
<gene>
    <name evidence="1" type="primary">sucC</name>
    <name type="ordered locus">YpAngola_A1386</name>
</gene>
<proteinExistence type="inferred from homology"/>
<evidence type="ECO:0000255" key="1">
    <source>
        <dbReference type="HAMAP-Rule" id="MF_00558"/>
    </source>
</evidence>
<dbReference type="EC" id="6.2.1.5" evidence="1"/>
<dbReference type="EMBL" id="CP000901">
    <property type="protein sequence ID" value="ABX87769.1"/>
    <property type="molecule type" value="Genomic_DNA"/>
</dbReference>
<dbReference type="RefSeq" id="WP_002210728.1">
    <property type="nucleotide sequence ID" value="NZ_CP009935.1"/>
</dbReference>
<dbReference type="SMR" id="A9R2F2"/>
<dbReference type="GeneID" id="57977251"/>
<dbReference type="KEGG" id="ypg:YpAngola_A1386"/>
<dbReference type="PATRIC" id="fig|349746.12.peg.2353"/>
<dbReference type="UniPathway" id="UPA00223">
    <property type="reaction ID" value="UER00999"/>
</dbReference>
<dbReference type="GO" id="GO:0005829">
    <property type="term" value="C:cytosol"/>
    <property type="evidence" value="ECO:0007669"/>
    <property type="project" value="TreeGrafter"/>
</dbReference>
<dbReference type="GO" id="GO:0042709">
    <property type="term" value="C:succinate-CoA ligase complex"/>
    <property type="evidence" value="ECO:0007669"/>
    <property type="project" value="TreeGrafter"/>
</dbReference>
<dbReference type="GO" id="GO:0005524">
    <property type="term" value="F:ATP binding"/>
    <property type="evidence" value="ECO:0007669"/>
    <property type="project" value="UniProtKB-UniRule"/>
</dbReference>
<dbReference type="GO" id="GO:0000287">
    <property type="term" value="F:magnesium ion binding"/>
    <property type="evidence" value="ECO:0007669"/>
    <property type="project" value="UniProtKB-UniRule"/>
</dbReference>
<dbReference type="GO" id="GO:0004775">
    <property type="term" value="F:succinate-CoA ligase (ADP-forming) activity"/>
    <property type="evidence" value="ECO:0007669"/>
    <property type="project" value="UniProtKB-UniRule"/>
</dbReference>
<dbReference type="GO" id="GO:0004776">
    <property type="term" value="F:succinate-CoA ligase (GDP-forming) activity"/>
    <property type="evidence" value="ECO:0007669"/>
    <property type="project" value="RHEA"/>
</dbReference>
<dbReference type="GO" id="GO:0006104">
    <property type="term" value="P:succinyl-CoA metabolic process"/>
    <property type="evidence" value="ECO:0007669"/>
    <property type="project" value="TreeGrafter"/>
</dbReference>
<dbReference type="GO" id="GO:0006099">
    <property type="term" value="P:tricarboxylic acid cycle"/>
    <property type="evidence" value="ECO:0007669"/>
    <property type="project" value="UniProtKB-UniRule"/>
</dbReference>
<dbReference type="FunFam" id="3.30.1490.20:FF:000002">
    <property type="entry name" value="Succinate--CoA ligase [ADP-forming] subunit beta"/>
    <property type="match status" value="1"/>
</dbReference>
<dbReference type="FunFam" id="3.30.470.20:FF:000002">
    <property type="entry name" value="Succinate--CoA ligase [ADP-forming] subunit beta"/>
    <property type="match status" value="1"/>
</dbReference>
<dbReference type="FunFam" id="3.40.50.261:FF:000001">
    <property type="entry name" value="Succinate--CoA ligase [ADP-forming] subunit beta"/>
    <property type="match status" value="1"/>
</dbReference>
<dbReference type="Gene3D" id="3.30.1490.20">
    <property type="entry name" value="ATP-grasp fold, A domain"/>
    <property type="match status" value="1"/>
</dbReference>
<dbReference type="Gene3D" id="3.30.470.20">
    <property type="entry name" value="ATP-grasp fold, B domain"/>
    <property type="match status" value="1"/>
</dbReference>
<dbReference type="Gene3D" id="3.40.50.261">
    <property type="entry name" value="Succinyl-CoA synthetase domains"/>
    <property type="match status" value="1"/>
</dbReference>
<dbReference type="HAMAP" id="MF_00558">
    <property type="entry name" value="Succ_CoA_beta"/>
    <property type="match status" value="1"/>
</dbReference>
<dbReference type="InterPro" id="IPR011761">
    <property type="entry name" value="ATP-grasp"/>
</dbReference>
<dbReference type="InterPro" id="IPR013650">
    <property type="entry name" value="ATP-grasp_succ-CoA_synth-type"/>
</dbReference>
<dbReference type="InterPro" id="IPR013815">
    <property type="entry name" value="ATP_grasp_subdomain_1"/>
</dbReference>
<dbReference type="InterPro" id="IPR017866">
    <property type="entry name" value="Succ-CoA_synthase_bsu_CS"/>
</dbReference>
<dbReference type="InterPro" id="IPR005811">
    <property type="entry name" value="SUCC_ACL_C"/>
</dbReference>
<dbReference type="InterPro" id="IPR005809">
    <property type="entry name" value="Succ_CoA_ligase-like_bsu"/>
</dbReference>
<dbReference type="InterPro" id="IPR016102">
    <property type="entry name" value="Succinyl-CoA_synth-like"/>
</dbReference>
<dbReference type="NCBIfam" id="NF001913">
    <property type="entry name" value="PRK00696.1"/>
    <property type="match status" value="1"/>
</dbReference>
<dbReference type="NCBIfam" id="TIGR01016">
    <property type="entry name" value="sucCoAbeta"/>
    <property type="match status" value="1"/>
</dbReference>
<dbReference type="PANTHER" id="PTHR11815:SF10">
    <property type="entry name" value="SUCCINATE--COA LIGASE [GDP-FORMING] SUBUNIT BETA, MITOCHONDRIAL"/>
    <property type="match status" value="1"/>
</dbReference>
<dbReference type="PANTHER" id="PTHR11815">
    <property type="entry name" value="SUCCINYL-COA SYNTHETASE BETA CHAIN"/>
    <property type="match status" value="1"/>
</dbReference>
<dbReference type="Pfam" id="PF08442">
    <property type="entry name" value="ATP-grasp_2"/>
    <property type="match status" value="1"/>
</dbReference>
<dbReference type="Pfam" id="PF00549">
    <property type="entry name" value="Ligase_CoA"/>
    <property type="match status" value="1"/>
</dbReference>
<dbReference type="PIRSF" id="PIRSF001554">
    <property type="entry name" value="SucCS_beta"/>
    <property type="match status" value="1"/>
</dbReference>
<dbReference type="SUPFAM" id="SSF56059">
    <property type="entry name" value="Glutathione synthetase ATP-binding domain-like"/>
    <property type="match status" value="1"/>
</dbReference>
<dbReference type="SUPFAM" id="SSF52210">
    <property type="entry name" value="Succinyl-CoA synthetase domains"/>
    <property type="match status" value="1"/>
</dbReference>
<dbReference type="PROSITE" id="PS50975">
    <property type="entry name" value="ATP_GRASP"/>
    <property type="match status" value="1"/>
</dbReference>
<dbReference type="PROSITE" id="PS01217">
    <property type="entry name" value="SUCCINYL_COA_LIG_3"/>
    <property type="match status" value="1"/>
</dbReference>
<sequence>MNLHEYQAKQLFARYGMPAPTGYACTTPREAEEAASKIGAGPWVVKCQVHAGGRGKAGGVKLVNSKEDIRAFAEQWLGKKLVTYQTDANGQPVHQILVEAATDIDKELYLGAVIDRSSRRVVFMASTEGGVEIEKVAEETPELIHKIALDPLTGPQPYQGRELAFKLGLTGKQVGQFTKIFMGLATLFLERDLAMVEINPLVVTKQGDLICLDGKLGADGNALFRQPELREMRDPSQEDAREAHAAQWELNYVALDGNIGCMVNGAGLAMGTMDIVKLHGGEPANFLDVGGGATKERVTEAFKIILSDDKVKAVFVNIFGGIVRCDLIADGIIGAVEEVGVNVPVVVRLEGNNAELGAKKLADSGLNIIAATSLTDAAQQVVAAVGAK</sequence>
<organism>
    <name type="scientific">Yersinia pestis bv. Antiqua (strain Angola)</name>
    <dbReference type="NCBI Taxonomy" id="349746"/>
    <lineage>
        <taxon>Bacteria</taxon>
        <taxon>Pseudomonadati</taxon>
        <taxon>Pseudomonadota</taxon>
        <taxon>Gammaproteobacteria</taxon>
        <taxon>Enterobacterales</taxon>
        <taxon>Yersiniaceae</taxon>
        <taxon>Yersinia</taxon>
    </lineage>
</organism>
<reference key="1">
    <citation type="journal article" date="2010" name="J. Bacteriol.">
        <title>Genome sequence of the deep-rooted Yersinia pestis strain Angola reveals new insights into the evolution and pangenome of the plague bacterium.</title>
        <authorList>
            <person name="Eppinger M."/>
            <person name="Worsham P.L."/>
            <person name="Nikolich M.P."/>
            <person name="Riley D.R."/>
            <person name="Sebastian Y."/>
            <person name="Mou S."/>
            <person name="Achtman M."/>
            <person name="Lindler L.E."/>
            <person name="Ravel J."/>
        </authorList>
    </citation>
    <scope>NUCLEOTIDE SEQUENCE [LARGE SCALE GENOMIC DNA]</scope>
    <source>
        <strain>Angola</strain>
    </source>
</reference>
<feature type="chain" id="PRO_1000129243" description="Succinate--CoA ligase [ADP-forming] subunit beta">
    <location>
        <begin position="1"/>
        <end position="388"/>
    </location>
</feature>
<feature type="domain" description="ATP-grasp" evidence="1">
    <location>
        <begin position="9"/>
        <end position="244"/>
    </location>
</feature>
<feature type="binding site" evidence="1">
    <location>
        <position position="46"/>
    </location>
    <ligand>
        <name>ATP</name>
        <dbReference type="ChEBI" id="CHEBI:30616"/>
    </ligand>
</feature>
<feature type="binding site" evidence="1">
    <location>
        <begin position="53"/>
        <end position="55"/>
    </location>
    <ligand>
        <name>ATP</name>
        <dbReference type="ChEBI" id="CHEBI:30616"/>
    </ligand>
</feature>
<feature type="binding site" evidence="1">
    <location>
        <position position="99"/>
    </location>
    <ligand>
        <name>ATP</name>
        <dbReference type="ChEBI" id="CHEBI:30616"/>
    </ligand>
</feature>
<feature type="binding site" evidence="1">
    <location>
        <position position="102"/>
    </location>
    <ligand>
        <name>ATP</name>
        <dbReference type="ChEBI" id="CHEBI:30616"/>
    </ligand>
</feature>
<feature type="binding site" evidence="1">
    <location>
        <position position="107"/>
    </location>
    <ligand>
        <name>ATP</name>
        <dbReference type="ChEBI" id="CHEBI:30616"/>
    </ligand>
</feature>
<feature type="binding site" evidence="1">
    <location>
        <position position="199"/>
    </location>
    <ligand>
        <name>Mg(2+)</name>
        <dbReference type="ChEBI" id="CHEBI:18420"/>
    </ligand>
</feature>
<feature type="binding site" evidence="1">
    <location>
        <position position="213"/>
    </location>
    <ligand>
        <name>Mg(2+)</name>
        <dbReference type="ChEBI" id="CHEBI:18420"/>
    </ligand>
</feature>
<feature type="binding site" evidence="1">
    <location>
        <position position="264"/>
    </location>
    <ligand>
        <name>substrate</name>
        <note>ligand shared with subunit alpha</note>
    </ligand>
</feature>
<feature type="binding site" evidence="1">
    <location>
        <begin position="321"/>
        <end position="323"/>
    </location>
    <ligand>
        <name>substrate</name>
        <note>ligand shared with subunit alpha</note>
    </ligand>
</feature>
<protein>
    <recommendedName>
        <fullName evidence="1">Succinate--CoA ligase [ADP-forming] subunit beta</fullName>
        <ecNumber evidence="1">6.2.1.5</ecNumber>
    </recommendedName>
    <alternativeName>
        <fullName evidence="1">Succinyl-CoA synthetase subunit beta</fullName>
        <shortName evidence="1">SCS-beta</shortName>
    </alternativeName>
</protein>
<comment type="function">
    <text evidence="1">Succinyl-CoA synthetase functions in the citric acid cycle (TCA), coupling the hydrolysis of succinyl-CoA to the synthesis of either ATP or GTP and thus represents the only step of substrate-level phosphorylation in the TCA. The beta subunit provides nucleotide specificity of the enzyme and binds the substrate succinate, while the binding sites for coenzyme A and phosphate are found in the alpha subunit.</text>
</comment>
<comment type="catalytic activity">
    <reaction evidence="1">
        <text>succinate + ATP + CoA = succinyl-CoA + ADP + phosphate</text>
        <dbReference type="Rhea" id="RHEA:17661"/>
        <dbReference type="ChEBI" id="CHEBI:30031"/>
        <dbReference type="ChEBI" id="CHEBI:30616"/>
        <dbReference type="ChEBI" id="CHEBI:43474"/>
        <dbReference type="ChEBI" id="CHEBI:57287"/>
        <dbReference type="ChEBI" id="CHEBI:57292"/>
        <dbReference type="ChEBI" id="CHEBI:456216"/>
        <dbReference type="EC" id="6.2.1.5"/>
    </reaction>
    <physiologicalReaction direction="right-to-left" evidence="1">
        <dbReference type="Rhea" id="RHEA:17663"/>
    </physiologicalReaction>
</comment>
<comment type="catalytic activity">
    <reaction evidence="1">
        <text>GTP + succinate + CoA = succinyl-CoA + GDP + phosphate</text>
        <dbReference type="Rhea" id="RHEA:22120"/>
        <dbReference type="ChEBI" id="CHEBI:30031"/>
        <dbReference type="ChEBI" id="CHEBI:37565"/>
        <dbReference type="ChEBI" id="CHEBI:43474"/>
        <dbReference type="ChEBI" id="CHEBI:57287"/>
        <dbReference type="ChEBI" id="CHEBI:57292"/>
        <dbReference type="ChEBI" id="CHEBI:58189"/>
    </reaction>
    <physiologicalReaction direction="right-to-left" evidence="1">
        <dbReference type="Rhea" id="RHEA:22122"/>
    </physiologicalReaction>
</comment>
<comment type="cofactor">
    <cofactor evidence="1">
        <name>Mg(2+)</name>
        <dbReference type="ChEBI" id="CHEBI:18420"/>
    </cofactor>
    <text evidence="1">Binds 1 Mg(2+) ion per subunit.</text>
</comment>
<comment type="pathway">
    <text evidence="1">Carbohydrate metabolism; tricarboxylic acid cycle; succinate from succinyl-CoA (ligase route): step 1/1.</text>
</comment>
<comment type="subunit">
    <text evidence="1">Heterotetramer of two alpha and two beta subunits.</text>
</comment>
<comment type="similarity">
    <text evidence="1">Belongs to the succinate/malate CoA ligase beta subunit family.</text>
</comment>